<comment type="function">
    <text evidence="1">Required for rescue of stalled ribosomes mediated by trans-translation. Binds to transfer-messenger RNA (tmRNA), required for stable association of tmRNA with ribosomes. tmRNA and SmpB together mimic tRNA shape, replacing the anticodon stem-loop with SmpB. tmRNA is encoded by the ssrA gene; the 2 termini fold to resemble tRNA(Ala) and it encodes a 'tag peptide', a short internal open reading frame. During trans-translation Ala-aminoacylated tmRNA acts like a tRNA, entering the A-site of stalled ribosomes, displacing the stalled mRNA. The ribosome then switches to translate the ORF on the tmRNA; the nascent peptide is terminated with the 'tag peptide' encoded by the tmRNA and targeted for degradation. The ribosome is freed to recommence translation, which seems to be the essential function of trans-translation.</text>
</comment>
<comment type="subcellular location">
    <subcellularLocation>
        <location evidence="1">Cytoplasm</location>
    </subcellularLocation>
    <text evidence="1">The tmRNA-SmpB complex associates with stalled 70S ribosomes.</text>
</comment>
<comment type="similarity">
    <text evidence="1">Belongs to the SmpB family.</text>
</comment>
<feature type="chain" id="PRO_1000002114" description="SsrA-binding protein">
    <location>
        <begin position="1"/>
        <end position="160"/>
    </location>
</feature>
<feature type="region of interest" description="Disordered" evidence="2">
    <location>
        <begin position="132"/>
        <end position="160"/>
    </location>
</feature>
<keyword id="KW-0963">Cytoplasm</keyword>
<keyword id="KW-0694">RNA-binding</keyword>
<proteinExistence type="inferred from homology"/>
<evidence type="ECO:0000255" key="1">
    <source>
        <dbReference type="HAMAP-Rule" id="MF_00023"/>
    </source>
</evidence>
<evidence type="ECO:0000256" key="2">
    <source>
        <dbReference type="SAM" id="MobiDB-lite"/>
    </source>
</evidence>
<accession>A5W9A9</accession>
<name>SSRP_PSEP1</name>
<sequence length="160" mass="18254">MAKQKKHPTGTIAQNKKARHDYFIEHKFEAGLVLSGWEVKSLRAGKAHLTDSYVLLKDGEAWLFGSHITPLTTASTHVIADPTRTRKLLLNKRELERVEAAVAQKGYTCVALALYWSKHLIKCEIALGKGKKEFDKRDTMRERDSNRELQRAVRNKGKEE</sequence>
<reference key="1">
    <citation type="submission" date="2007-05" db="EMBL/GenBank/DDBJ databases">
        <title>Complete sequence of Pseudomonas putida F1.</title>
        <authorList>
            <consortium name="US DOE Joint Genome Institute"/>
            <person name="Copeland A."/>
            <person name="Lucas S."/>
            <person name="Lapidus A."/>
            <person name="Barry K."/>
            <person name="Detter J.C."/>
            <person name="Glavina del Rio T."/>
            <person name="Hammon N."/>
            <person name="Israni S."/>
            <person name="Dalin E."/>
            <person name="Tice H."/>
            <person name="Pitluck S."/>
            <person name="Chain P."/>
            <person name="Malfatti S."/>
            <person name="Shin M."/>
            <person name="Vergez L."/>
            <person name="Schmutz J."/>
            <person name="Larimer F."/>
            <person name="Land M."/>
            <person name="Hauser L."/>
            <person name="Kyrpides N."/>
            <person name="Lykidis A."/>
            <person name="Parales R."/>
            <person name="Richardson P."/>
        </authorList>
    </citation>
    <scope>NUCLEOTIDE SEQUENCE [LARGE SCALE GENOMIC DNA]</scope>
    <source>
        <strain>ATCC 700007 / DSM 6899 / JCM 31910 / BCRC 17059 / LMG 24140 / F1</strain>
    </source>
</reference>
<dbReference type="EMBL" id="CP000712">
    <property type="protein sequence ID" value="ABQ80719.1"/>
    <property type="molecule type" value="Genomic_DNA"/>
</dbReference>
<dbReference type="SMR" id="A5W9A9"/>
<dbReference type="KEGG" id="ppf:Pput_4599"/>
<dbReference type="eggNOG" id="COG0691">
    <property type="taxonomic scope" value="Bacteria"/>
</dbReference>
<dbReference type="HOGENOM" id="CLU_108953_3_0_6"/>
<dbReference type="GO" id="GO:0005829">
    <property type="term" value="C:cytosol"/>
    <property type="evidence" value="ECO:0007669"/>
    <property type="project" value="TreeGrafter"/>
</dbReference>
<dbReference type="GO" id="GO:0003723">
    <property type="term" value="F:RNA binding"/>
    <property type="evidence" value="ECO:0007669"/>
    <property type="project" value="UniProtKB-UniRule"/>
</dbReference>
<dbReference type="GO" id="GO:0070929">
    <property type="term" value="P:trans-translation"/>
    <property type="evidence" value="ECO:0007669"/>
    <property type="project" value="UniProtKB-UniRule"/>
</dbReference>
<dbReference type="CDD" id="cd09294">
    <property type="entry name" value="SmpB"/>
    <property type="match status" value="1"/>
</dbReference>
<dbReference type="Gene3D" id="2.40.280.10">
    <property type="match status" value="1"/>
</dbReference>
<dbReference type="HAMAP" id="MF_00023">
    <property type="entry name" value="SmpB"/>
    <property type="match status" value="1"/>
</dbReference>
<dbReference type="InterPro" id="IPR023620">
    <property type="entry name" value="SmpB"/>
</dbReference>
<dbReference type="InterPro" id="IPR000037">
    <property type="entry name" value="SsrA-bd_prot"/>
</dbReference>
<dbReference type="InterPro" id="IPR020081">
    <property type="entry name" value="SsrA-bd_prot_CS"/>
</dbReference>
<dbReference type="NCBIfam" id="NF003843">
    <property type="entry name" value="PRK05422.1"/>
    <property type="match status" value="1"/>
</dbReference>
<dbReference type="NCBIfam" id="TIGR00086">
    <property type="entry name" value="smpB"/>
    <property type="match status" value="1"/>
</dbReference>
<dbReference type="PANTHER" id="PTHR30308:SF2">
    <property type="entry name" value="SSRA-BINDING PROTEIN"/>
    <property type="match status" value="1"/>
</dbReference>
<dbReference type="PANTHER" id="PTHR30308">
    <property type="entry name" value="TMRNA-BINDING COMPONENT OF TRANS-TRANSLATION TAGGING COMPLEX"/>
    <property type="match status" value="1"/>
</dbReference>
<dbReference type="Pfam" id="PF01668">
    <property type="entry name" value="SmpB"/>
    <property type="match status" value="1"/>
</dbReference>
<dbReference type="SUPFAM" id="SSF74982">
    <property type="entry name" value="Small protein B (SmpB)"/>
    <property type="match status" value="1"/>
</dbReference>
<dbReference type="PROSITE" id="PS01317">
    <property type="entry name" value="SSRP"/>
    <property type="match status" value="1"/>
</dbReference>
<protein>
    <recommendedName>
        <fullName evidence="1">SsrA-binding protein</fullName>
    </recommendedName>
    <alternativeName>
        <fullName evidence="1">Small protein B</fullName>
    </alternativeName>
</protein>
<organism>
    <name type="scientific">Pseudomonas putida (strain ATCC 700007 / DSM 6899 / JCM 31910 / BCRC 17059 / LMG 24140 / F1)</name>
    <dbReference type="NCBI Taxonomy" id="351746"/>
    <lineage>
        <taxon>Bacteria</taxon>
        <taxon>Pseudomonadati</taxon>
        <taxon>Pseudomonadota</taxon>
        <taxon>Gammaproteobacteria</taxon>
        <taxon>Pseudomonadales</taxon>
        <taxon>Pseudomonadaceae</taxon>
        <taxon>Pseudomonas</taxon>
    </lineage>
</organism>
<gene>
    <name evidence="1" type="primary">smpB</name>
    <name type="ordered locus">Pput_4599</name>
</gene>